<keyword id="KW-0963">Cytoplasm</keyword>
<keyword id="KW-0472">Membrane</keyword>
<keyword id="KW-1185">Reference proteome</keyword>
<keyword id="KW-0812">Transmembrane</keyword>
<keyword id="KW-1133">Transmembrane helix</keyword>
<evidence type="ECO:0000250" key="1">
    <source>
        <dbReference type="UniProtKB" id="P55160"/>
    </source>
</evidence>
<evidence type="ECO:0000255" key="2"/>
<evidence type="ECO:0000256" key="3">
    <source>
        <dbReference type="SAM" id="MobiDB-lite"/>
    </source>
</evidence>
<evidence type="ECO:0000269" key="4">
    <source>
    </source>
</evidence>
<evidence type="ECO:0000269" key="5">
    <source>
    </source>
</evidence>
<evidence type="ECO:0000303" key="6">
    <source>
    </source>
</evidence>
<evidence type="ECO:0000305" key="7"/>
<evidence type="ECO:0000312" key="8">
    <source>
        <dbReference type="MGI" id="MGI:1926063"/>
    </source>
</evidence>
<name>NCKPL_MOUSE</name>
<gene>
    <name evidence="8" type="primary">Nckap1l</name>
    <name evidence="8" type="synonym">Hem1</name>
</gene>
<accession>Q8K1X4</accession>
<proteinExistence type="evidence at protein level"/>
<reference key="1">
    <citation type="journal article" date="2005" name="Science">
        <title>The transcriptional landscape of the mammalian genome.</title>
        <authorList>
            <person name="Carninci P."/>
            <person name="Kasukawa T."/>
            <person name="Katayama S."/>
            <person name="Gough J."/>
            <person name="Frith M.C."/>
            <person name="Maeda N."/>
            <person name="Oyama R."/>
            <person name="Ravasi T."/>
            <person name="Lenhard B."/>
            <person name="Wells C."/>
            <person name="Kodzius R."/>
            <person name="Shimokawa K."/>
            <person name="Bajic V.B."/>
            <person name="Brenner S.E."/>
            <person name="Batalov S."/>
            <person name="Forrest A.R."/>
            <person name="Zavolan M."/>
            <person name="Davis M.J."/>
            <person name="Wilming L.G."/>
            <person name="Aidinis V."/>
            <person name="Allen J.E."/>
            <person name="Ambesi-Impiombato A."/>
            <person name="Apweiler R."/>
            <person name="Aturaliya R.N."/>
            <person name="Bailey T.L."/>
            <person name="Bansal M."/>
            <person name="Baxter L."/>
            <person name="Beisel K.W."/>
            <person name="Bersano T."/>
            <person name="Bono H."/>
            <person name="Chalk A.M."/>
            <person name="Chiu K.P."/>
            <person name="Choudhary V."/>
            <person name="Christoffels A."/>
            <person name="Clutterbuck D.R."/>
            <person name="Crowe M.L."/>
            <person name="Dalla E."/>
            <person name="Dalrymple B.P."/>
            <person name="de Bono B."/>
            <person name="Della Gatta G."/>
            <person name="di Bernardo D."/>
            <person name="Down T."/>
            <person name="Engstrom P."/>
            <person name="Fagiolini M."/>
            <person name="Faulkner G."/>
            <person name="Fletcher C.F."/>
            <person name="Fukushima T."/>
            <person name="Furuno M."/>
            <person name="Futaki S."/>
            <person name="Gariboldi M."/>
            <person name="Georgii-Hemming P."/>
            <person name="Gingeras T.R."/>
            <person name="Gojobori T."/>
            <person name="Green R.E."/>
            <person name="Gustincich S."/>
            <person name="Harbers M."/>
            <person name="Hayashi Y."/>
            <person name="Hensch T.K."/>
            <person name="Hirokawa N."/>
            <person name="Hill D."/>
            <person name="Huminiecki L."/>
            <person name="Iacono M."/>
            <person name="Ikeo K."/>
            <person name="Iwama A."/>
            <person name="Ishikawa T."/>
            <person name="Jakt M."/>
            <person name="Kanapin A."/>
            <person name="Katoh M."/>
            <person name="Kawasawa Y."/>
            <person name="Kelso J."/>
            <person name="Kitamura H."/>
            <person name="Kitano H."/>
            <person name="Kollias G."/>
            <person name="Krishnan S.P."/>
            <person name="Kruger A."/>
            <person name="Kummerfeld S.K."/>
            <person name="Kurochkin I.V."/>
            <person name="Lareau L.F."/>
            <person name="Lazarevic D."/>
            <person name="Lipovich L."/>
            <person name="Liu J."/>
            <person name="Liuni S."/>
            <person name="McWilliam S."/>
            <person name="Madan Babu M."/>
            <person name="Madera M."/>
            <person name="Marchionni L."/>
            <person name="Matsuda H."/>
            <person name="Matsuzawa S."/>
            <person name="Miki H."/>
            <person name="Mignone F."/>
            <person name="Miyake S."/>
            <person name="Morris K."/>
            <person name="Mottagui-Tabar S."/>
            <person name="Mulder N."/>
            <person name="Nakano N."/>
            <person name="Nakauchi H."/>
            <person name="Ng P."/>
            <person name="Nilsson R."/>
            <person name="Nishiguchi S."/>
            <person name="Nishikawa S."/>
            <person name="Nori F."/>
            <person name="Ohara O."/>
            <person name="Okazaki Y."/>
            <person name="Orlando V."/>
            <person name="Pang K.C."/>
            <person name="Pavan W.J."/>
            <person name="Pavesi G."/>
            <person name="Pesole G."/>
            <person name="Petrovsky N."/>
            <person name="Piazza S."/>
            <person name="Reed J."/>
            <person name="Reid J.F."/>
            <person name="Ring B.Z."/>
            <person name="Ringwald M."/>
            <person name="Rost B."/>
            <person name="Ruan Y."/>
            <person name="Salzberg S.L."/>
            <person name="Sandelin A."/>
            <person name="Schneider C."/>
            <person name="Schoenbach C."/>
            <person name="Sekiguchi K."/>
            <person name="Semple C.A."/>
            <person name="Seno S."/>
            <person name="Sessa L."/>
            <person name="Sheng Y."/>
            <person name="Shibata Y."/>
            <person name="Shimada H."/>
            <person name="Shimada K."/>
            <person name="Silva D."/>
            <person name="Sinclair B."/>
            <person name="Sperling S."/>
            <person name="Stupka E."/>
            <person name="Sugiura K."/>
            <person name="Sultana R."/>
            <person name="Takenaka Y."/>
            <person name="Taki K."/>
            <person name="Tammoja K."/>
            <person name="Tan S.L."/>
            <person name="Tang S."/>
            <person name="Taylor M.S."/>
            <person name="Tegner J."/>
            <person name="Teichmann S.A."/>
            <person name="Ueda H.R."/>
            <person name="van Nimwegen E."/>
            <person name="Verardo R."/>
            <person name="Wei C.L."/>
            <person name="Yagi K."/>
            <person name="Yamanishi H."/>
            <person name="Zabarovsky E."/>
            <person name="Zhu S."/>
            <person name="Zimmer A."/>
            <person name="Hide W."/>
            <person name="Bult C."/>
            <person name="Grimmond S.M."/>
            <person name="Teasdale R.D."/>
            <person name="Liu E.T."/>
            <person name="Brusic V."/>
            <person name="Quackenbush J."/>
            <person name="Wahlestedt C."/>
            <person name="Mattick J.S."/>
            <person name="Hume D.A."/>
            <person name="Kai C."/>
            <person name="Sasaki D."/>
            <person name="Tomaru Y."/>
            <person name="Fukuda S."/>
            <person name="Kanamori-Katayama M."/>
            <person name="Suzuki M."/>
            <person name="Aoki J."/>
            <person name="Arakawa T."/>
            <person name="Iida J."/>
            <person name="Imamura K."/>
            <person name="Itoh M."/>
            <person name="Kato T."/>
            <person name="Kawaji H."/>
            <person name="Kawagashira N."/>
            <person name="Kawashima T."/>
            <person name="Kojima M."/>
            <person name="Kondo S."/>
            <person name="Konno H."/>
            <person name="Nakano K."/>
            <person name="Ninomiya N."/>
            <person name="Nishio T."/>
            <person name="Okada M."/>
            <person name="Plessy C."/>
            <person name="Shibata K."/>
            <person name="Shiraki T."/>
            <person name="Suzuki S."/>
            <person name="Tagami M."/>
            <person name="Waki K."/>
            <person name="Watahiki A."/>
            <person name="Okamura-Oho Y."/>
            <person name="Suzuki H."/>
            <person name="Kawai J."/>
            <person name="Hayashizaki Y."/>
        </authorList>
    </citation>
    <scope>NUCLEOTIDE SEQUENCE [LARGE SCALE MRNA]</scope>
</reference>
<reference key="2">
    <citation type="journal article" date="2009" name="PLoS Biol.">
        <title>Lineage-specific biology revealed by a finished genome assembly of the mouse.</title>
        <authorList>
            <person name="Church D.M."/>
            <person name="Goodstadt L."/>
            <person name="Hillier L.W."/>
            <person name="Zody M.C."/>
            <person name="Goldstein S."/>
            <person name="She X."/>
            <person name="Bult C.J."/>
            <person name="Agarwala R."/>
            <person name="Cherry J.L."/>
            <person name="DiCuccio M."/>
            <person name="Hlavina W."/>
            <person name="Kapustin Y."/>
            <person name="Meric P."/>
            <person name="Maglott D."/>
            <person name="Birtle Z."/>
            <person name="Marques A.C."/>
            <person name="Graves T."/>
            <person name="Zhou S."/>
            <person name="Teague B."/>
            <person name="Potamousis K."/>
            <person name="Churas C."/>
            <person name="Place M."/>
            <person name="Herschleb J."/>
            <person name="Runnheim R."/>
            <person name="Forrest D."/>
            <person name="Amos-Landgraf J."/>
            <person name="Schwartz D.C."/>
            <person name="Cheng Z."/>
            <person name="Lindblad-Toh K."/>
            <person name="Eichler E.E."/>
            <person name="Ponting C.P."/>
        </authorList>
    </citation>
    <scope>NUCLEOTIDE SEQUENCE [LARGE SCALE GENOMIC DNA]</scope>
    <source>
        <strain>C57BL/6J</strain>
    </source>
</reference>
<reference key="3">
    <citation type="journal article" date="2004" name="Genome Res.">
        <title>The status, quality, and expansion of the NIH full-length cDNA project: the Mammalian Gene Collection (MGC).</title>
        <authorList>
            <consortium name="The MGC Project Team"/>
        </authorList>
    </citation>
    <scope>NUCLEOTIDE SEQUENCE [LARGE SCALE MRNA]</scope>
    <source>
        <strain>FVB/N</strain>
    </source>
</reference>
<reference key="4">
    <citation type="journal article" date="2008" name="J. Exp. Med.">
        <title>A point mutation in the murine Hem1 gene reveals an essential role for Hematopoietic protein 1 in lymphopoiesis and innate immunity.</title>
        <authorList>
            <person name="Park H."/>
            <person name="Staehling-Hampton K."/>
            <person name="Appleby M.W."/>
            <person name="Brunkow M.E."/>
            <person name="Habib T."/>
            <person name="Zhang Y."/>
            <person name="Ramsdell F."/>
            <person name="Liggitt H.D."/>
            <person name="Freie B."/>
            <person name="Tsang M."/>
            <person name="Carlson G."/>
            <person name="Friend S."/>
            <person name="Frevert C."/>
            <person name="Iritani B.M."/>
        </authorList>
    </citation>
    <scope>FUNCTION</scope>
    <scope>DISRUPTION PHENOTYPE</scope>
    <scope>TISSUE SPECIFICITY</scope>
</reference>
<reference key="5">
    <citation type="journal article" date="2010" name="Cell">
        <title>A tissue-specific atlas of mouse protein phosphorylation and expression.</title>
        <authorList>
            <person name="Huttlin E.L."/>
            <person name="Jedrychowski M.P."/>
            <person name="Elias J.E."/>
            <person name="Goswami T."/>
            <person name="Rad R."/>
            <person name="Beausoleil S.A."/>
            <person name="Villen J."/>
            <person name="Haas W."/>
            <person name="Sowa M.E."/>
            <person name="Gygi S.P."/>
        </authorList>
    </citation>
    <scope>IDENTIFICATION BY MASS SPECTROMETRY [LARGE SCALE ANALYSIS]</scope>
    <source>
        <tissue>Heart</tissue>
        <tissue>Liver</tissue>
        <tissue>Lung</tissue>
        <tissue>Spleen</tissue>
    </source>
</reference>
<reference key="6">
    <citation type="journal article" date="2013" name="PLoS ONE">
        <title>Hematopoietic protein-1 regulates the actin membrane skeleton and membrane stability in murine erythrocytes.</title>
        <authorList>
            <person name="Chan M.M."/>
            <person name="Wooden J.M."/>
            <person name="Tsang M."/>
            <person name="Gilligan D.M."/>
            <person name="Hirenallur-S D.K."/>
            <person name="Finney G.L."/>
            <person name="Rynes E."/>
            <person name="Maccoss M."/>
            <person name="Ramirez J.A."/>
            <person name="Park H."/>
            <person name="Iritani B.M."/>
        </authorList>
    </citation>
    <scope>FUNCTION</scope>
    <scope>DISRUPTION PHENOTYPE</scope>
</reference>
<comment type="function">
    <text evidence="1 4 5">Essential hematopoietic-specific regulator of the actin cytoskeleton. Controls lymphocyte development, activation, proliferation and homeostasis, erythrocyte membrane stability, as well as phagocytosis and migration by neutrophils and macrophages (PubMed:19015308, PubMed:23424621). Component of the WAVE2 complex which signals downstream of RAC to stimulate F-actin polymerization (PubMed:23424621). Required for stabilization and/or translation of the WAVE2 complex proteins in hematopoietic cells (PubMed:19015308). Within the WAVE2 complex, enables the cortical actin network to restrain excessive degranulation and granule release by T-cells. Required for efficient T-lymphocyte and neutrophil migration (By similarity). Exhibits complex cycles of activation and inhibition to generate waves of propagating the assembly with actin. Also involved in mechanisms WAVE independent to regulate myosin and actin polymerization during neutrophil chemotaxis (By similarity). In T-cells, required for proper mechanistic target of rapamycin complex 2 (mTORC2)-dependent AKT phosphorylation, cell proliferation and cytokine secretion, including that of IL2 and TNF (By similarity).</text>
</comment>
<comment type="subunit">
    <text evidence="1">In hematopoietic cells, component of the WAVE2 complex composed of ABI1, CYFIP1/SRA1, NCKAP1L/HEM1 and WASF2/WAVE2. Interacts with ARHGAP4, PIK3C3/VPS34 and PPP1R12A/MYPT1. Interacts with mammalian target of rapamycin complex 2 (mTORC2) components, including MTOR and RICTOR.</text>
</comment>
<comment type="subcellular location">
    <subcellularLocation>
        <location evidence="1">Membrane</location>
        <topology evidence="2">Single-pass membrane protein</topology>
    </subcellularLocation>
    <subcellularLocation>
        <location evidence="1">Cytoplasm</location>
    </subcellularLocation>
    <text evidence="1">Localizes to the leading edge of polarized neutrophils.</text>
</comment>
<comment type="tissue specificity">
    <text evidence="4">Predominantly expressed in developing and mature hematopoietic cells. Also detected in urogenital tissues, including testis.</text>
</comment>
<comment type="disruption phenotype">
    <text evidence="4 5">Mutants exhibit lymphopenia, neutrophilia and anemia. T cell development is disrupted at the CD4(-)CD8(-) to CD4(+)CD8(+) cell stages and T cell activation and adhesion are impaired. Neutrophils fail to migrate in response to chemotactic agents and are deficient in their ability to phagocytose bacteria. They show enhanced Th17 cells production (PubMed:19015308). The anemia is microcytic, hypochromic and characterized by abnormally shaped erythrocytes with aberrant F-actin foci and decreased lifespan (PubMed:23424621).</text>
</comment>
<organism>
    <name type="scientific">Mus musculus</name>
    <name type="common">Mouse</name>
    <dbReference type="NCBI Taxonomy" id="10090"/>
    <lineage>
        <taxon>Eukaryota</taxon>
        <taxon>Metazoa</taxon>
        <taxon>Chordata</taxon>
        <taxon>Craniata</taxon>
        <taxon>Vertebrata</taxon>
        <taxon>Euteleostomi</taxon>
        <taxon>Mammalia</taxon>
        <taxon>Eutheria</taxon>
        <taxon>Euarchontoglires</taxon>
        <taxon>Glires</taxon>
        <taxon>Rodentia</taxon>
        <taxon>Myomorpha</taxon>
        <taxon>Muroidea</taxon>
        <taxon>Muridae</taxon>
        <taxon>Murinae</taxon>
        <taxon>Mus</taxon>
        <taxon>Mus</taxon>
    </lineage>
</organism>
<protein>
    <recommendedName>
        <fullName evidence="7">Nck-associated protein 1-like</fullName>
    </recommendedName>
    <alternativeName>
        <fullName evidence="6">Hematopoietic protein 1</fullName>
    </alternativeName>
</protein>
<dbReference type="EMBL" id="AK083390">
    <property type="protein sequence ID" value="BAC38898.1"/>
    <property type="molecule type" value="mRNA"/>
</dbReference>
<dbReference type="EMBL" id="AC131721">
    <property type="status" value="NOT_ANNOTATED_CDS"/>
    <property type="molecule type" value="Genomic_DNA"/>
</dbReference>
<dbReference type="EMBL" id="BC037096">
    <property type="protein sequence ID" value="AAH37096.1"/>
    <property type="molecule type" value="mRNA"/>
</dbReference>
<dbReference type="CCDS" id="CCDS37236.1"/>
<dbReference type="RefSeq" id="NP_705725.1">
    <property type="nucleotide sequence ID" value="NM_153505.4"/>
</dbReference>
<dbReference type="RefSeq" id="XP_006520318.2">
    <property type="nucleotide sequence ID" value="XM_006520255.4"/>
</dbReference>
<dbReference type="SMR" id="Q8K1X4"/>
<dbReference type="FunCoup" id="Q8K1X4">
    <property type="interactions" value="727"/>
</dbReference>
<dbReference type="IntAct" id="Q8K1X4">
    <property type="interactions" value="1"/>
</dbReference>
<dbReference type="MINT" id="Q8K1X4"/>
<dbReference type="STRING" id="10090.ENSMUSP00000035400"/>
<dbReference type="iPTMnet" id="Q8K1X4"/>
<dbReference type="PhosphoSitePlus" id="Q8K1X4"/>
<dbReference type="PaxDb" id="10090-ENSMUSP00000035400"/>
<dbReference type="PeptideAtlas" id="Q8K1X4"/>
<dbReference type="ProteomicsDB" id="252925"/>
<dbReference type="Antibodypedia" id="27500">
    <property type="antibodies" value="152 antibodies from 24 providers"/>
</dbReference>
<dbReference type="DNASU" id="105855"/>
<dbReference type="Ensembl" id="ENSMUST00000047405.9">
    <property type="protein sequence ID" value="ENSMUSP00000035400.8"/>
    <property type="gene ID" value="ENSMUSG00000022488.10"/>
</dbReference>
<dbReference type="GeneID" id="105855"/>
<dbReference type="KEGG" id="mmu:105855"/>
<dbReference type="UCSC" id="uc007xyf.1">
    <property type="organism name" value="mouse"/>
</dbReference>
<dbReference type="AGR" id="MGI:1926063"/>
<dbReference type="CTD" id="3071"/>
<dbReference type="MGI" id="MGI:1926063">
    <property type="gene designation" value="Nckap1l"/>
</dbReference>
<dbReference type="VEuPathDB" id="HostDB:ENSMUSG00000022488"/>
<dbReference type="eggNOG" id="KOG1917">
    <property type="taxonomic scope" value="Eukaryota"/>
</dbReference>
<dbReference type="GeneTree" id="ENSGT00390000016619"/>
<dbReference type="HOGENOM" id="CLU_004450_0_0_1"/>
<dbReference type="InParanoid" id="Q8K1X4"/>
<dbReference type="OMA" id="LIWHVAS"/>
<dbReference type="OrthoDB" id="22960at9989"/>
<dbReference type="PhylomeDB" id="Q8K1X4"/>
<dbReference type="TreeFam" id="TF313683"/>
<dbReference type="Reactome" id="R-MMU-2029482">
    <property type="pathway name" value="Regulation of actin dynamics for phagocytic cup formation"/>
</dbReference>
<dbReference type="Reactome" id="R-MMU-4420097">
    <property type="pathway name" value="VEGFA-VEGFR2 Pathway"/>
</dbReference>
<dbReference type="Reactome" id="R-MMU-5663213">
    <property type="pathway name" value="RHO GTPases Activate WASPs and WAVEs"/>
</dbReference>
<dbReference type="Reactome" id="R-MMU-6798695">
    <property type="pathway name" value="Neutrophil degranulation"/>
</dbReference>
<dbReference type="Reactome" id="R-MMU-9013149">
    <property type="pathway name" value="RAC1 GTPase cycle"/>
</dbReference>
<dbReference type="Reactome" id="R-MMU-9013404">
    <property type="pathway name" value="RAC2 GTPase cycle"/>
</dbReference>
<dbReference type="Reactome" id="R-MMU-9013423">
    <property type="pathway name" value="RAC3 GTPase cycle"/>
</dbReference>
<dbReference type="BioGRID-ORCS" id="105855">
    <property type="hits" value="7 hits in 77 CRISPR screens"/>
</dbReference>
<dbReference type="PRO" id="PR:Q8K1X4"/>
<dbReference type="Proteomes" id="UP000000589">
    <property type="component" value="Chromosome 15"/>
</dbReference>
<dbReference type="RNAct" id="Q8K1X4">
    <property type="molecule type" value="protein"/>
</dbReference>
<dbReference type="Bgee" id="ENSMUSG00000022488">
    <property type="expression patterns" value="Expressed in granulocyte and 145 other cell types or tissues"/>
</dbReference>
<dbReference type="ExpressionAtlas" id="Q8K1X4">
    <property type="expression patterns" value="baseline and differential"/>
</dbReference>
<dbReference type="GO" id="GO:0005829">
    <property type="term" value="C:cytosol"/>
    <property type="evidence" value="ECO:0000250"/>
    <property type="project" value="UniProtKB"/>
</dbReference>
<dbReference type="GO" id="GO:0005886">
    <property type="term" value="C:plasma membrane"/>
    <property type="evidence" value="ECO:0007669"/>
    <property type="project" value="Ensembl"/>
</dbReference>
<dbReference type="GO" id="GO:0031209">
    <property type="term" value="C:SCAR complex"/>
    <property type="evidence" value="ECO:0000315"/>
    <property type="project" value="UniProtKB"/>
</dbReference>
<dbReference type="GO" id="GO:0005096">
    <property type="term" value="F:GTPase activator activity"/>
    <property type="evidence" value="ECO:0000250"/>
    <property type="project" value="UniProtKB"/>
</dbReference>
<dbReference type="GO" id="GO:0030295">
    <property type="term" value="F:protein kinase activator activity"/>
    <property type="evidence" value="ECO:0000250"/>
    <property type="project" value="UniProtKB"/>
</dbReference>
<dbReference type="GO" id="GO:0044877">
    <property type="term" value="F:protein-containing complex binding"/>
    <property type="evidence" value="ECO:0000250"/>
    <property type="project" value="UniProtKB"/>
</dbReference>
<dbReference type="GO" id="GO:1904841">
    <property type="term" value="F:TORC2 complex binding"/>
    <property type="evidence" value="ECO:0000250"/>
    <property type="project" value="UniProtKB"/>
</dbReference>
<dbReference type="GO" id="GO:0070358">
    <property type="term" value="P:actin polymerization-dependent cell motility"/>
    <property type="evidence" value="ECO:0000250"/>
    <property type="project" value="UniProtKB"/>
</dbReference>
<dbReference type="GO" id="GO:0001782">
    <property type="term" value="P:B cell homeostasis"/>
    <property type="evidence" value="ECO:0000315"/>
    <property type="project" value="UniProtKB"/>
</dbReference>
<dbReference type="GO" id="GO:0050853">
    <property type="term" value="P:B cell receptor signaling pathway"/>
    <property type="evidence" value="ECO:0000250"/>
    <property type="project" value="UniProtKB"/>
</dbReference>
<dbReference type="GO" id="GO:0006935">
    <property type="term" value="P:chemotaxis"/>
    <property type="evidence" value="ECO:0000250"/>
    <property type="project" value="UniProtKB"/>
</dbReference>
<dbReference type="GO" id="GO:0030866">
    <property type="term" value="P:cortical actin cytoskeleton organization"/>
    <property type="evidence" value="ECO:0000315"/>
    <property type="project" value="UniProtKB"/>
</dbReference>
<dbReference type="GO" id="GO:0048821">
    <property type="term" value="P:erythrocyte development"/>
    <property type="evidence" value="ECO:0007669"/>
    <property type="project" value="Ensembl"/>
</dbReference>
<dbReference type="GO" id="GO:0034101">
    <property type="term" value="P:erythrocyte homeostasis"/>
    <property type="evidence" value="ECO:0000315"/>
    <property type="project" value="UniProtKB"/>
</dbReference>
<dbReference type="GO" id="GO:0035556">
    <property type="term" value="P:intracellular signal transduction"/>
    <property type="evidence" value="ECO:0000250"/>
    <property type="project" value="UniProtKB"/>
</dbReference>
<dbReference type="GO" id="GO:0030011">
    <property type="term" value="P:maintenance of cell polarity"/>
    <property type="evidence" value="ECO:0000250"/>
    <property type="project" value="UniProtKB"/>
</dbReference>
<dbReference type="GO" id="GO:0002262">
    <property type="term" value="P:myeloid cell homeostasis"/>
    <property type="evidence" value="ECO:0000315"/>
    <property type="project" value="UniProtKB"/>
</dbReference>
<dbReference type="GO" id="GO:0043066">
    <property type="term" value="P:negative regulation of apoptotic process"/>
    <property type="evidence" value="ECO:0000250"/>
    <property type="project" value="UniProtKB"/>
</dbReference>
<dbReference type="GO" id="GO:0043318">
    <property type="term" value="P:negative regulation of cytotoxic T cell degranulation"/>
    <property type="evidence" value="ECO:0000250"/>
    <property type="project" value="UniProtKB"/>
</dbReference>
<dbReference type="GO" id="GO:0032700">
    <property type="term" value="P:negative regulation of interleukin-17 production"/>
    <property type="evidence" value="ECO:0000315"/>
    <property type="project" value="UniProtKB"/>
</dbReference>
<dbReference type="GO" id="GO:0032715">
    <property type="term" value="P:negative regulation of interleukin-6 production"/>
    <property type="evidence" value="ECO:0000315"/>
    <property type="project" value="UniProtKB"/>
</dbReference>
<dbReference type="GO" id="GO:0030838">
    <property type="term" value="P:positive regulation of actin filament polymerization"/>
    <property type="evidence" value="ECO:0000315"/>
    <property type="project" value="UniProtKB"/>
</dbReference>
<dbReference type="GO" id="GO:0045579">
    <property type="term" value="P:positive regulation of B cell differentiation"/>
    <property type="evidence" value="ECO:0000315"/>
    <property type="project" value="UniProtKB"/>
</dbReference>
<dbReference type="GO" id="GO:0030890">
    <property type="term" value="P:positive regulation of B cell proliferation"/>
    <property type="evidence" value="ECO:0000250"/>
    <property type="project" value="UniProtKB"/>
</dbReference>
<dbReference type="GO" id="GO:0043372">
    <property type="term" value="P:positive regulation of CD4-positive, alpha-beta T cell differentiation"/>
    <property type="evidence" value="ECO:0000315"/>
    <property type="project" value="UniProtKB"/>
</dbReference>
<dbReference type="GO" id="GO:0043378">
    <property type="term" value="P:positive regulation of CD8-positive, alpha-beta T cell differentiation"/>
    <property type="evidence" value="ECO:0000315"/>
    <property type="project" value="UniProtKB"/>
</dbReference>
<dbReference type="GO" id="GO:0033630">
    <property type="term" value="P:positive regulation of cell adhesion mediated by integrin"/>
    <property type="evidence" value="ECO:0000315"/>
    <property type="project" value="UniProtKB"/>
</dbReference>
<dbReference type="GO" id="GO:0045648">
    <property type="term" value="P:positive regulation of erythrocyte differentiation"/>
    <property type="evidence" value="ECO:0000315"/>
    <property type="project" value="UniProtKB"/>
</dbReference>
<dbReference type="GO" id="GO:0045588">
    <property type="term" value="P:positive regulation of gamma-delta T cell differentiation"/>
    <property type="evidence" value="ECO:0000315"/>
    <property type="project" value="UniProtKB"/>
</dbReference>
<dbReference type="GO" id="GO:0002687">
    <property type="term" value="P:positive regulation of leukocyte migration"/>
    <property type="evidence" value="ECO:0000250"/>
    <property type="project" value="UniProtKB"/>
</dbReference>
<dbReference type="GO" id="GO:0045621">
    <property type="term" value="P:positive regulation of lymphocyte differentiation"/>
    <property type="evidence" value="ECO:0000315"/>
    <property type="project" value="UniProtKB"/>
</dbReference>
<dbReference type="GO" id="GO:0090023">
    <property type="term" value="P:positive regulation of neutrophil chemotaxis"/>
    <property type="evidence" value="ECO:0000315"/>
    <property type="project" value="UniProtKB"/>
</dbReference>
<dbReference type="GO" id="GO:1902624">
    <property type="term" value="P:positive regulation of neutrophil migration"/>
    <property type="evidence" value="ECO:0000250"/>
    <property type="project" value="UniProtKB"/>
</dbReference>
<dbReference type="GO" id="GO:0060100">
    <property type="term" value="P:positive regulation of phagocytosis, engulfment"/>
    <property type="evidence" value="ECO:0000315"/>
    <property type="project" value="UniProtKB"/>
</dbReference>
<dbReference type="GO" id="GO:0042102">
    <property type="term" value="P:positive regulation of T cell proliferation"/>
    <property type="evidence" value="ECO:0000315"/>
    <property type="project" value="UniProtKB"/>
</dbReference>
<dbReference type="GO" id="GO:1904515">
    <property type="term" value="P:positive regulation of TORC2 signaling"/>
    <property type="evidence" value="ECO:0000250"/>
    <property type="project" value="UniProtKB"/>
</dbReference>
<dbReference type="GO" id="GO:0065003">
    <property type="term" value="P:protein-containing complex assembly"/>
    <property type="evidence" value="ECO:0000315"/>
    <property type="project" value="UniProtKB"/>
</dbReference>
<dbReference type="GO" id="GO:0009410">
    <property type="term" value="P:response to xenobiotic stimulus"/>
    <property type="evidence" value="ECO:0000250"/>
    <property type="project" value="UniProtKB"/>
</dbReference>
<dbReference type="GO" id="GO:0043029">
    <property type="term" value="P:T cell homeostasis"/>
    <property type="evidence" value="ECO:0000315"/>
    <property type="project" value="UniProtKB"/>
</dbReference>
<dbReference type="InterPro" id="IPR019137">
    <property type="entry name" value="Nck-associated_protein-1"/>
</dbReference>
<dbReference type="PANTHER" id="PTHR12093">
    <property type="entry name" value="NCK-ASSOCIATED PROTEIN 1"/>
    <property type="match status" value="1"/>
</dbReference>
<dbReference type="PANTHER" id="PTHR12093:SF9">
    <property type="entry name" value="NCK-ASSOCIATED PROTEIN 1-LIKE"/>
    <property type="match status" value="1"/>
</dbReference>
<dbReference type="Pfam" id="PF09735">
    <property type="entry name" value="Nckap1"/>
    <property type="match status" value="1"/>
</dbReference>
<sequence length="1134" mass="128905">MSLTSAYQLKLAEKLTILNDRGQGVLIRMYNIKKTCSDSKSKPPFLLEKSMESCLKYINKKFPNIDVRNSTQHLGPVHREKAEIIRFLTNYYQSFVDVMEFRDHVYELLNTIDACQCHFDINLNFDFTRSYLDLIVTYTSVILLLSRIEDRRILIGMYNCAHEMLHGHSDPSFARLGQMVLEYDHPLKKLTEEFGPHTKAVSGALLSLHFLFVRRNQGAEQWRSAQLLSLISSPPAMINPANSDTMACEYLSVEVMERWIIIGFLLCHGCLNSNSQCQKLWKLCLEGSLYITLIREDVLQVHKVTEDLFSSLKGYSKRVADIKESKEHAITNSGQFHCQRRQFLRTAVKELETVLNDEPGLLGPKALFAFMALSFIRDEVTWLVRHTENVTKTKTPEDYADSSIAELLFLLEEIRALVRRHIKVIQQYHLQYLARFDVLVLSDIIQNLSVCPEEESVIMSSFVSILSSLNLKQVDNEEKFDFSGLRLDWFRLQAYTSVSKAPLHLHENPDLAKVMNLIIFHSQMLDSVEKMLVETSDLSTFCFHLRTFEKMFATTLEEPTMLRYTIAFPLICAHFVHCVHEMCPEEYPHLKNHGLHHCNSFLEDLAKQTSNCVLEICAEQRNLNEQLLPKHCATTISKAKNKKSMKQRQAPRKGEPERDKPGAESHRKNRSLVTNMDKLHLNLTELALAMNHVHSFSVFEHTIFPSEYLSSHLEARLNRAIVTLAGYNATTQEILRPSELLAGVKAYISFIQSLAQFLGADASRIVRNALLQQTQPLDSSGEQTVTTLYTNWYLESLLRQASSGAIVLSPAMQAFISLPRDGEQNFSAEEFSDISEMRALAEILGPYGMKFLSENLMWHVTSQIVELKKLVVENMDILVQIRSNFSKPELMASLLPQLTGAENVLKRMTIIGVILSFRAMAQEGLQEVFSAHCPFLMGPIECLKEFVTPDTDIKVTLSVFELACAAGVSCDIDPALVAAIANLKADNSSPEEEYKVACLLLIFLAVSLPLLATDPSSFFSIEKDGYNNNIHCLTKAIIQVSAALFTLYNKNIETHLKEFLVVASVSLLQLGQETDKLKTRNRESISLLMRLVVEESPFLTLDMLESCFPYVLLRNAYREVSRAFYLNRLPASSH</sequence>
<feature type="chain" id="PRO_0000439210" description="Nck-associated protein 1-like">
    <location>
        <begin position="1"/>
        <end position="1134"/>
    </location>
</feature>
<feature type="transmembrane region" description="Helical" evidence="2">
    <location>
        <begin position="999"/>
        <end position="1019"/>
    </location>
</feature>
<feature type="region of interest" description="Disordered" evidence="3">
    <location>
        <begin position="638"/>
        <end position="671"/>
    </location>
</feature>
<feature type="compositionally biased region" description="Basic residues" evidence="3">
    <location>
        <begin position="639"/>
        <end position="651"/>
    </location>
</feature>
<feature type="compositionally biased region" description="Basic and acidic residues" evidence="3">
    <location>
        <begin position="652"/>
        <end position="666"/>
    </location>
</feature>